<accession>Q9WV78</accession>
<organism>
    <name type="scientific">Rattus norvegicus</name>
    <name type="common">Rat</name>
    <dbReference type="NCBI Taxonomy" id="10116"/>
    <lineage>
        <taxon>Eukaryota</taxon>
        <taxon>Metazoa</taxon>
        <taxon>Chordata</taxon>
        <taxon>Craniata</taxon>
        <taxon>Vertebrata</taxon>
        <taxon>Euteleostomi</taxon>
        <taxon>Mammalia</taxon>
        <taxon>Eutheria</taxon>
        <taxon>Euarchontoglires</taxon>
        <taxon>Glires</taxon>
        <taxon>Rodentia</taxon>
        <taxon>Myomorpha</taxon>
        <taxon>Muroidea</taxon>
        <taxon>Muridae</taxon>
        <taxon>Murinae</taxon>
        <taxon>Rattus</taxon>
    </lineage>
</organism>
<dbReference type="EMBL" id="AF154831">
    <property type="protein sequence ID" value="AAD41524.1"/>
    <property type="molecule type" value="mRNA"/>
</dbReference>
<dbReference type="EMBL" id="BC070900">
    <property type="protein sequence ID" value="AAH70900.1"/>
    <property type="molecule type" value="mRNA"/>
</dbReference>
<dbReference type="RefSeq" id="NP_064471.1">
    <property type="nucleotide sequence ID" value="NM_020086.1"/>
</dbReference>
<dbReference type="SMR" id="Q9WV78"/>
<dbReference type="BioGRID" id="248574">
    <property type="interactions" value="1"/>
</dbReference>
<dbReference type="FunCoup" id="Q9WV78">
    <property type="interactions" value="46"/>
</dbReference>
<dbReference type="IntAct" id="Q9WV78">
    <property type="interactions" value="1"/>
</dbReference>
<dbReference type="STRING" id="10116.ENSRNOP00000023927"/>
<dbReference type="GlyCosmos" id="Q9WV78">
    <property type="glycosylation" value="4 sites, No reported glycans"/>
</dbReference>
<dbReference type="GlyGen" id="Q9WV78">
    <property type="glycosylation" value="4 sites"/>
</dbReference>
<dbReference type="iPTMnet" id="Q9WV78"/>
<dbReference type="PhosphoSitePlus" id="Q9WV78"/>
<dbReference type="SwissPalm" id="Q9WV78"/>
<dbReference type="PaxDb" id="10116-ENSRNOP00000023927"/>
<dbReference type="Ensembl" id="ENSRNOT00000023926.6">
    <property type="protein sequence ID" value="ENSRNOP00000023927.4"/>
    <property type="gene ID" value="ENSRNOG00000017676.6"/>
</dbReference>
<dbReference type="GeneID" id="56765"/>
<dbReference type="KEGG" id="rno:56765"/>
<dbReference type="UCSC" id="RGD:619971">
    <property type="organism name" value="rat"/>
</dbReference>
<dbReference type="AGR" id="RGD:619971"/>
<dbReference type="CTD" id="83483"/>
<dbReference type="RGD" id="619971">
    <property type="gene designation" value="Plvap"/>
</dbReference>
<dbReference type="eggNOG" id="ENOG502S1PR">
    <property type="taxonomic scope" value="Eukaryota"/>
</dbReference>
<dbReference type="GeneTree" id="ENSGT00390000006166"/>
<dbReference type="HOGENOM" id="CLU_049986_0_0_1"/>
<dbReference type="InParanoid" id="Q9WV78"/>
<dbReference type="OMA" id="ETNKSCD"/>
<dbReference type="OrthoDB" id="9944409at2759"/>
<dbReference type="PhylomeDB" id="Q9WV78"/>
<dbReference type="TreeFam" id="TF337332"/>
<dbReference type="PRO" id="PR:Q9WV78"/>
<dbReference type="Proteomes" id="UP000002494">
    <property type="component" value="Chromosome 16"/>
</dbReference>
<dbReference type="Bgee" id="ENSRNOG00000017676">
    <property type="expression patterns" value="Expressed in lung and 17 other cell types or tissues"/>
</dbReference>
<dbReference type="ExpressionAtlas" id="Q9WV78">
    <property type="expression patterns" value="baseline and differential"/>
</dbReference>
<dbReference type="GO" id="GO:0005901">
    <property type="term" value="C:caveola"/>
    <property type="evidence" value="ECO:0000314"/>
    <property type="project" value="RGD"/>
</dbReference>
<dbReference type="GO" id="GO:0009986">
    <property type="term" value="C:cell surface"/>
    <property type="evidence" value="ECO:0000266"/>
    <property type="project" value="RGD"/>
</dbReference>
<dbReference type="GO" id="GO:0048471">
    <property type="term" value="C:perinuclear region of cytoplasm"/>
    <property type="evidence" value="ECO:0007669"/>
    <property type="project" value="UniProtKB-SubCell"/>
</dbReference>
<dbReference type="GO" id="GO:0042802">
    <property type="term" value="F:identical protein binding"/>
    <property type="evidence" value="ECO:0000353"/>
    <property type="project" value="RGD"/>
</dbReference>
<dbReference type="GO" id="GO:0032502">
    <property type="term" value="P:developmental process"/>
    <property type="evidence" value="ECO:0000250"/>
    <property type="project" value="UniProtKB"/>
</dbReference>
<dbReference type="GO" id="GO:0000165">
    <property type="term" value="P:MAPK cascade"/>
    <property type="evidence" value="ECO:0000266"/>
    <property type="project" value="RGD"/>
</dbReference>
<dbReference type="GO" id="GO:0002693">
    <property type="term" value="P:positive regulation of cellular extravasation"/>
    <property type="evidence" value="ECO:0000266"/>
    <property type="project" value="RGD"/>
</dbReference>
<dbReference type="GO" id="GO:0043114">
    <property type="term" value="P:regulation of vascular permeability"/>
    <property type="evidence" value="ECO:0000318"/>
    <property type="project" value="GO_Central"/>
</dbReference>
<dbReference type="GO" id="GO:0033209">
    <property type="term" value="P:tumor necrosis factor-mediated signaling pathway"/>
    <property type="evidence" value="ECO:0000266"/>
    <property type="project" value="RGD"/>
</dbReference>
<dbReference type="InterPro" id="IPR009538">
    <property type="entry name" value="PV-1"/>
</dbReference>
<dbReference type="PANTHER" id="PTHR21687">
    <property type="entry name" value="PLASMALEMMA VESICLE-ASSOCIATED PROTEIN"/>
    <property type="match status" value="1"/>
</dbReference>
<dbReference type="PANTHER" id="PTHR21687:SF5">
    <property type="entry name" value="PLASMALEMMA VESICLE-ASSOCIATED PROTEIN"/>
    <property type="match status" value="1"/>
</dbReference>
<dbReference type="Pfam" id="PF06637">
    <property type="entry name" value="PV-1"/>
    <property type="match status" value="1"/>
</dbReference>
<reference key="1">
    <citation type="journal article" date="1999" name="J. Cell Biol.">
        <title>Isolation, cloning, and localization of rat PV-1, a novel endothelial caveolar protein.</title>
        <authorList>
            <person name="Stan R.-V."/>
            <person name="Ghitescu L."/>
            <person name="Jacobson B.S."/>
            <person name="Palade G.E."/>
        </authorList>
    </citation>
    <scope>NUCLEOTIDE SEQUENCE [MRNA]</scope>
    <scope>PROTEIN SEQUENCE OF 1-16; 232-241 AND 248-264</scope>
    <scope>SUBCELLULAR LOCATION</scope>
    <scope>TISSUE SPECIFICITY</scope>
    <source>
        <strain>Sprague-Dawley</strain>
        <tissue>Lung endothelial cell</tissue>
    </source>
</reference>
<reference key="2">
    <citation type="journal article" date="1999" name="Proc. Natl. Acad. Sci. U.S.A.">
        <title>PV-1 is a component of the fenestral and stomatal diaphragms in fenestrated endothelia.</title>
        <authorList>
            <person name="Stan R.-V."/>
            <person name="Kubitza M."/>
            <person name="Palade G.E."/>
        </authorList>
    </citation>
    <scope>NUCLEOTIDE SEQUENCE [MRNA]</scope>
    <scope>SUBCELLULAR LOCATION</scope>
    <scope>TISSUE SPECIFICITY</scope>
    <source>
        <strain>Sprague-Dawley</strain>
        <tissue>Lung endothelial cell</tissue>
    </source>
</reference>
<reference key="3">
    <citation type="journal article" date="2004" name="Genome Res.">
        <title>The status, quality, and expansion of the NIH full-length cDNA project: the Mammalian Gene Collection (MGC).</title>
        <authorList>
            <consortium name="The MGC Project Team"/>
        </authorList>
    </citation>
    <scope>NUCLEOTIDE SEQUENCE [LARGE SCALE MRNA]</scope>
    <source>
        <tissue>Lung</tissue>
    </source>
</reference>
<reference key="4">
    <citation type="journal article" date="2002" name="J. Endocrinol.">
        <title>Distribution and characterization of plasmalemma vesicle protein-1 in rat endocrine glands.</title>
        <authorList>
            <person name="Hnasko R."/>
            <person name="McFarland M."/>
            <person name="Ben-Jonathan N."/>
        </authorList>
    </citation>
    <scope>TISSUE SPECIFICITY</scope>
</reference>
<reference key="5">
    <citation type="journal article" date="2004" name="Am. J. Physiol.">
        <title>Multiple PV1 dimers reside in the same stomatal or fenestral diaphragm.</title>
        <authorList>
            <person name="Stan R.-V."/>
        </authorList>
    </citation>
    <scope>SUBUNIT</scope>
</reference>
<reference key="6">
    <citation type="journal article" date="2005" name="Am. J. Physiol.">
        <title>Developmental regulation of PV-1 in rat lung: association with the nuclear envelope and limited colocalization with Cav-1.</title>
        <authorList>
            <person name="Hnasko R."/>
            <person name="Ben-Jonathan N."/>
        </authorList>
    </citation>
    <scope>SUBCELLULAR LOCATION</scope>
    <scope>DEVELOPMENTAL STAGE</scope>
    <scope>TISSUE SPECIFICITY</scope>
</reference>
<sequence>MGLSMDRSPYSRTGDRDRGCWYYLRYFFLFVSLIQFLIILGLVLFMIYGNVHATTESSLRATEIRADNLYSQVVGLSAAQANLSKQLNISTLVKDTVMQQLLTTRREVERINASFRQCQGDLITYINYNRFIAAIILSEKQCQEQLKEGNKTCEALLFKLGEKVKTLEMEVVKEKAVCSKDKDSLLAGKRQAEMQQEACGKAREQQKQDQQVTEEQLRKVQSLCLPLDQEKFQADVLNVWRDSLVYRSLDNIGYHYSLMPEFSSLRRTCESLPGIMTTKVEELARGLRAGIERVTRENGELRRQKLELERAIQGEREARTRAGTEAQARETQLRTECARQTQLALEEKAALRTQRDDLERQLEARKRELEQLRTEVDVRISALDTCVKAKSLPAIQPRLPGPPPNPPPIDPASLEEFKKRILESQRPPLVNPAVPPSG</sequence>
<keyword id="KW-1003">Cell membrane</keyword>
<keyword id="KW-0175">Coiled coil</keyword>
<keyword id="KW-0963">Cytoplasm</keyword>
<keyword id="KW-0903">Direct protein sequencing</keyword>
<keyword id="KW-0325">Glycoprotein</keyword>
<keyword id="KW-0472">Membrane</keyword>
<keyword id="KW-1185">Reference proteome</keyword>
<keyword id="KW-0735">Signal-anchor</keyword>
<keyword id="KW-0812">Transmembrane</keyword>
<keyword id="KW-1133">Transmembrane helix</keyword>
<gene>
    <name type="primary">Plvap</name>
    <name type="synonym">Pv1</name>
</gene>
<name>PLVAP_RAT</name>
<comment type="function">
    <text evidence="1">Endothelial cell-specific membrane protein involved in the formation of the diaphragms that bridge endothelial fenestrae. It is also required for the formation of stomata of caveolae and transendothelial channels. Functions in microvascular permeability, endothelial fenestrae contributing to the passage of water and solutes and regulating transcellular versus paracellular flow in different organs. Plays a specific role in embryonic development.</text>
</comment>
<comment type="subunit">
    <text evidence="7">Homodimer.</text>
</comment>
<comment type="subcellular location">
    <subcellularLocation>
        <location evidence="4 5">Cell membrane</location>
        <topology evidence="2">Single-pass type II membrane protein</topology>
    </subcellularLocation>
    <subcellularLocation>
        <location evidence="4 5">Membrane</location>
        <location evidence="4 5">Caveola</location>
        <topology evidence="2">Single-pass type II membrane protein</topology>
    </subcellularLocation>
    <subcellularLocation>
        <location evidence="8">Cytoplasm</location>
        <location evidence="8">Perinuclear region</location>
    </subcellularLocation>
    <text evidence="4 5 8">Membrane-associated protein of caveolae (PubMed:10366592). Found in fenestral and stomatal diaphragms in fenestrated endothelia and transendothelial channels (PubMed:10557298). Also colocalized with CAV1 in perinuclear region (PubMed:15640522).</text>
</comment>
<comment type="tissue specificity">
    <text evidence="4 5 6 8">Expressed in lung (alveolar endothelial and bronchial epithelial cells), kidney (endothelium of peritubular capillaries), spleen, liver, adrenal (endothelial cells of the zona reticularis of the cortex and chromaffin cells in the medulla), pancreas (islets of Langerhans), testis (germ cells, interstitial cells in neonatal testis and spermatids), ovary (stromal endothelial, thecal layer of developing follicles, luteal cells within the corpus luteum), intestine (endothelium of capillaries of the intestinal villi) and pituitary (pituicyte cells in the neural lobe) (at protein level). Expressed in lung, kidney, spleen, liver, adrenal, testis, heart, muscle, pituitary, thyroid and ovary.</text>
</comment>
<comment type="developmental stage">
    <text evidence="8">Expressed in endothelial cells of the lung at 12 dpc.</text>
</comment>
<feature type="chain" id="PRO_0000058464" description="Plasmalemma vesicle-associated protein">
    <location>
        <begin position="1"/>
        <end position="438"/>
    </location>
</feature>
<feature type="topological domain" description="Cytoplasmic" evidence="2">
    <location>
        <begin position="1"/>
        <end position="26"/>
    </location>
</feature>
<feature type="transmembrane region" description="Helical; Signal-anchor for type II membrane protein" evidence="2">
    <location>
        <begin position="27"/>
        <end position="47"/>
    </location>
</feature>
<feature type="topological domain" description="Extracellular" evidence="2">
    <location>
        <begin position="48"/>
        <end position="438"/>
    </location>
</feature>
<feature type="region of interest" description="Disordered" evidence="3">
    <location>
        <begin position="393"/>
        <end position="438"/>
    </location>
</feature>
<feature type="coiled-coil region" evidence="2">
    <location>
        <begin position="289"/>
        <end position="383"/>
    </location>
</feature>
<feature type="compositionally biased region" description="Pro residues" evidence="3">
    <location>
        <begin position="399"/>
        <end position="410"/>
    </location>
</feature>
<feature type="compositionally biased region" description="Pro residues" evidence="3">
    <location>
        <begin position="429"/>
        <end position="438"/>
    </location>
</feature>
<feature type="glycosylation site" description="N-linked (GlcNAc...) asparagine" evidence="2">
    <location>
        <position position="82"/>
    </location>
</feature>
<feature type="glycosylation site" description="N-linked (GlcNAc...) asparagine" evidence="2">
    <location>
        <position position="88"/>
    </location>
</feature>
<feature type="glycosylation site" description="N-linked (GlcNAc...) asparagine" evidence="2">
    <location>
        <position position="112"/>
    </location>
</feature>
<feature type="glycosylation site" description="N-linked (GlcNAc...) asparagine" evidence="2">
    <location>
        <position position="150"/>
    </location>
</feature>
<protein>
    <recommendedName>
        <fullName>Plasmalemma vesicle-associated protein</fullName>
    </recommendedName>
    <alternativeName>
        <fullName>Plasmalemma vesicle protein 1</fullName>
        <shortName>PV-1</shortName>
    </alternativeName>
    <alternativeName>
        <fullName>gp68</fullName>
    </alternativeName>
</protein>
<evidence type="ECO:0000250" key="1">
    <source>
        <dbReference type="UniProtKB" id="Q91VC4"/>
    </source>
</evidence>
<evidence type="ECO:0000255" key="2"/>
<evidence type="ECO:0000256" key="3">
    <source>
        <dbReference type="SAM" id="MobiDB-lite"/>
    </source>
</evidence>
<evidence type="ECO:0000269" key="4">
    <source>
    </source>
</evidence>
<evidence type="ECO:0000269" key="5">
    <source>
    </source>
</evidence>
<evidence type="ECO:0000269" key="6">
    <source>
    </source>
</evidence>
<evidence type="ECO:0000269" key="7">
    <source>
    </source>
</evidence>
<evidence type="ECO:0000269" key="8">
    <source>
    </source>
</evidence>
<proteinExistence type="evidence at protein level"/>